<sequence length="200" mass="23300">MFLARLTSRLARTVVPWAGFSRSCPGSGVIGSYAFRPLYSLQPASPSRAASLPGKRTQSELEEFLVPRKMAISPLESWLTAQYLLPRRNVEVPVTLAPSQFYECPPRQGEEEAQQGVREAWDATPVQCKNVLKIRRRKMNHHKYRKLVKRTRFLRRKVREGRLKKKQIKFEKDLKRIWLKAGLKEAPENWQTPKIYLKNK</sequence>
<reference key="1">
    <citation type="journal article" date="2005" name="Science">
        <title>The transcriptional landscape of the mammalian genome.</title>
        <authorList>
            <person name="Carninci P."/>
            <person name="Kasukawa T."/>
            <person name="Katayama S."/>
            <person name="Gough J."/>
            <person name="Frith M.C."/>
            <person name="Maeda N."/>
            <person name="Oyama R."/>
            <person name="Ravasi T."/>
            <person name="Lenhard B."/>
            <person name="Wells C."/>
            <person name="Kodzius R."/>
            <person name="Shimokawa K."/>
            <person name="Bajic V.B."/>
            <person name="Brenner S.E."/>
            <person name="Batalov S."/>
            <person name="Forrest A.R."/>
            <person name="Zavolan M."/>
            <person name="Davis M.J."/>
            <person name="Wilming L.G."/>
            <person name="Aidinis V."/>
            <person name="Allen J.E."/>
            <person name="Ambesi-Impiombato A."/>
            <person name="Apweiler R."/>
            <person name="Aturaliya R.N."/>
            <person name="Bailey T.L."/>
            <person name="Bansal M."/>
            <person name="Baxter L."/>
            <person name="Beisel K.W."/>
            <person name="Bersano T."/>
            <person name="Bono H."/>
            <person name="Chalk A.M."/>
            <person name="Chiu K.P."/>
            <person name="Choudhary V."/>
            <person name="Christoffels A."/>
            <person name="Clutterbuck D.R."/>
            <person name="Crowe M.L."/>
            <person name="Dalla E."/>
            <person name="Dalrymple B.P."/>
            <person name="de Bono B."/>
            <person name="Della Gatta G."/>
            <person name="di Bernardo D."/>
            <person name="Down T."/>
            <person name="Engstrom P."/>
            <person name="Fagiolini M."/>
            <person name="Faulkner G."/>
            <person name="Fletcher C.F."/>
            <person name="Fukushima T."/>
            <person name="Furuno M."/>
            <person name="Futaki S."/>
            <person name="Gariboldi M."/>
            <person name="Georgii-Hemming P."/>
            <person name="Gingeras T.R."/>
            <person name="Gojobori T."/>
            <person name="Green R.E."/>
            <person name="Gustincich S."/>
            <person name="Harbers M."/>
            <person name="Hayashi Y."/>
            <person name="Hensch T.K."/>
            <person name="Hirokawa N."/>
            <person name="Hill D."/>
            <person name="Huminiecki L."/>
            <person name="Iacono M."/>
            <person name="Ikeo K."/>
            <person name="Iwama A."/>
            <person name="Ishikawa T."/>
            <person name="Jakt M."/>
            <person name="Kanapin A."/>
            <person name="Katoh M."/>
            <person name="Kawasawa Y."/>
            <person name="Kelso J."/>
            <person name="Kitamura H."/>
            <person name="Kitano H."/>
            <person name="Kollias G."/>
            <person name="Krishnan S.P."/>
            <person name="Kruger A."/>
            <person name="Kummerfeld S.K."/>
            <person name="Kurochkin I.V."/>
            <person name="Lareau L.F."/>
            <person name="Lazarevic D."/>
            <person name="Lipovich L."/>
            <person name="Liu J."/>
            <person name="Liuni S."/>
            <person name="McWilliam S."/>
            <person name="Madan Babu M."/>
            <person name="Madera M."/>
            <person name="Marchionni L."/>
            <person name="Matsuda H."/>
            <person name="Matsuzawa S."/>
            <person name="Miki H."/>
            <person name="Mignone F."/>
            <person name="Miyake S."/>
            <person name="Morris K."/>
            <person name="Mottagui-Tabar S."/>
            <person name="Mulder N."/>
            <person name="Nakano N."/>
            <person name="Nakauchi H."/>
            <person name="Ng P."/>
            <person name="Nilsson R."/>
            <person name="Nishiguchi S."/>
            <person name="Nishikawa S."/>
            <person name="Nori F."/>
            <person name="Ohara O."/>
            <person name="Okazaki Y."/>
            <person name="Orlando V."/>
            <person name="Pang K.C."/>
            <person name="Pavan W.J."/>
            <person name="Pavesi G."/>
            <person name="Pesole G."/>
            <person name="Petrovsky N."/>
            <person name="Piazza S."/>
            <person name="Reed J."/>
            <person name="Reid J.F."/>
            <person name="Ring B.Z."/>
            <person name="Ringwald M."/>
            <person name="Rost B."/>
            <person name="Ruan Y."/>
            <person name="Salzberg S.L."/>
            <person name="Sandelin A."/>
            <person name="Schneider C."/>
            <person name="Schoenbach C."/>
            <person name="Sekiguchi K."/>
            <person name="Semple C.A."/>
            <person name="Seno S."/>
            <person name="Sessa L."/>
            <person name="Sheng Y."/>
            <person name="Shibata Y."/>
            <person name="Shimada H."/>
            <person name="Shimada K."/>
            <person name="Silva D."/>
            <person name="Sinclair B."/>
            <person name="Sperling S."/>
            <person name="Stupka E."/>
            <person name="Sugiura K."/>
            <person name="Sultana R."/>
            <person name="Takenaka Y."/>
            <person name="Taki K."/>
            <person name="Tammoja K."/>
            <person name="Tan S.L."/>
            <person name="Tang S."/>
            <person name="Taylor M.S."/>
            <person name="Tegner J."/>
            <person name="Teichmann S.A."/>
            <person name="Ueda H.R."/>
            <person name="van Nimwegen E."/>
            <person name="Verardo R."/>
            <person name="Wei C.L."/>
            <person name="Yagi K."/>
            <person name="Yamanishi H."/>
            <person name="Zabarovsky E."/>
            <person name="Zhu S."/>
            <person name="Zimmer A."/>
            <person name="Hide W."/>
            <person name="Bult C."/>
            <person name="Grimmond S.M."/>
            <person name="Teasdale R.D."/>
            <person name="Liu E.T."/>
            <person name="Brusic V."/>
            <person name="Quackenbush J."/>
            <person name="Wahlestedt C."/>
            <person name="Mattick J.S."/>
            <person name="Hume D.A."/>
            <person name="Kai C."/>
            <person name="Sasaki D."/>
            <person name="Tomaru Y."/>
            <person name="Fukuda S."/>
            <person name="Kanamori-Katayama M."/>
            <person name="Suzuki M."/>
            <person name="Aoki J."/>
            <person name="Arakawa T."/>
            <person name="Iida J."/>
            <person name="Imamura K."/>
            <person name="Itoh M."/>
            <person name="Kato T."/>
            <person name="Kawaji H."/>
            <person name="Kawagashira N."/>
            <person name="Kawashima T."/>
            <person name="Kojima M."/>
            <person name="Kondo S."/>
            <person name="Konno H."/>
            <person name="Nakano K."/>
            <person name="Ninomiya N."/>
            <person name="Nishio T."/>
            <person name="Okada M."/>
            <person name="Plessy C."/>
            <person name="Shibata K."/>
            <person name="Shiraki T."/>
            <person name="Suzuki S."/>
            <person name="Tagami M."/>
            <person name="Waki K."/>
            <person name="Watahiki A."/>
            <person name="Okamura-Oho Y."/>
            <person name="Suzuki H."/>
            <person name="Kawai J."/>
            <person name="Hayashizaki Y."/>
        </authorList>
    </citation>
    <scope>NUCLEOTIDE SEQUENCE [LARGE SCALE MRNA]</scope>
    <source>
        <strain>C57BL/6J</strain>
        <tissue>Kidney</tissue>
        <tissue>Lung</tissue>
    </source>
</reference>
<reference key="2">
    <citation type="journal article" date="2009" name="PLoS Biol.">
        <title>Lineage-specific biology revealed by a finished genome assembly of the mouse.</title>
        <authorList>
            <person name="Church D.M."/>
            <person name="Goodstadt L."/>
            <person name="Hillier L.W."/>
            <person name="Zody M.C."/>
            <person name="Goldstein S."/>
            <person name="She X."/>
            <person name="Bult C.J."/>
            <person name="Agarwala R."/>
            <person name="Cherry J.L."/>
            <person name="DiCuccio M."/>
            <person name="Hlavina W."/>
            <person name="Kapustin Y."/>
            <person name="Meric P."/>
            <person name="Maglott D."/>
            <person name="Birtle Z."/>
            <person name="Marques A.C."/>
            <person name="Graves T."/>
            <person name="Zhou S."/>
            <person name="Teague B."/>
            <person name="Potamousis K."/>
            <person name="Churas C."/>
            <person name="Place M."/>
            <person name="Herschleb J."/>
            <person name="Runnheim R."/>
            <person name="Forrest D."/>
            <person name="Amos-Landgraf J."/>
            <person name="Schwartz D.C."/>
            <person name="Cheng Z."/>
            <person name="Lindblad-Toh K."/>
            <person name="Eichler E.E."/>
            <person name="Ponting C.P."/>
        </authorList>
    </citation>
    <scope>NUCLEOTIDE SEQUENCE [LARGE SCALE GENOMIC DNA]</scope>
    <source>
        <strain>C57BL/6J</strain>
    </source>
</reference>
<name>AKIP_MOUSE</name>
<comment type="function">
    <text>May act as a negative regulator of Aurora-A kinase, by down-regulation through proteasome-dependent degradation.</text>
</comment>
<comment type="subunit">
    <text evidence="1">Component of the mitochondrial ribosome small subunit (28S) which comprises a 12S rRNA and about 30 distinct proteins (By similarity). Interacts with Aurora-A.</text>
</comment>
<comment type="subcellular location">
    <subcellularLocation>
        <location evidence="2">Mitochondrion matrix</location>
    </subcellularLocation>
    <subcellularLocation>
        <location evidence="2">Nucleus</location>
    </subcellularLocation>
</comment>
<comment type="tissue specificity">
    <text>Ubiquitously expressed and especially highly expressed in heart, skeletal muscle and testis.</text>
</comment>
<comment type="similarity">
    <text evidence="3">Belongs to the mitochondrion-specific ribosomal protein mS38 family.</text>
</comment>
<organism>
    <name type="scientific">Mus musculus</name>
    <name type="common">Mouse</name>
    <dbReference type="NCBI Taxonomy" id="10090"/>
    <lineage>
        <taxon>Eukaryota</taxon>
        <taxon>Metazoa</taxon>
        <taxon>Chordata</taxon>
        <taxon>Craniata</taxon>
        <taxon>Vertebrata</taxon>
        <taxon>Euteleostomi</taxon>
        <taxon>Mammalia</taxon>
        <taxon>Eutheria</taxon>
        <taxon>Euarchontoglires</taxon>
        <taxon>Glires</taxon>
        <taxon>Rodentia</taxon>
        <taxon>Myomorpha</taxon>
        <taxon>Muroidea</taxon>
        <taxon>Muridae</taxon>
        <taxon>Murinae</taxon>
        <taxon>Mus</taxon>
        <taxon>Mus</taxon>
    </lineage>
</organism>
<gene>
    <name type="primary">Aurkaip1</name>
    <name type="synonym">Aip</name>
    <name type="synonym">Akip</name>
    <name type="synonym">Mrps38</name>
</gene>
<protein>
    <recommendedName>
        <fullName evidence="3">Small ribosomal subunit protein mS38</fullName>
    </recommendedName>
    <alternativeName>
        <fullName>28S ribosomal protein S38, mitochondrial</fullName>
        <shortName>MRP-S38</shortName>
    </alternativeName>
    <alternativeName>
        <fullName>Aurora kinase A-interacting protein</fullName>
        <shortName>AURKA-interacting protein</shortName>
    </alternativeName>
</protein>
<accession>Q9DCJ7</accession>
<accession>Q9D1J7</accession>
<keyword id="KW-0002">3D-structure</keyword>
<keyword id="KW-0496">Mitochondrion</keyword>
<keyword id="KW-0539">Nucleus</keyword>
<keyword id="KW-1185">Reference proteome</keyword>
<keyword id="KW-0687">Ribonucleoprotein</keyword>
<keyword id="KW-0689">Ribosomal protein</keyword>
<feature type="chain" id="PRO_0000064537" description="Small ribosomal subunit protein mS38">
    <location>
        <begin position="1"/>
        <end position="200"/>
    </location>
</feature>
<feature type="sequence conflict" description="In Ref. 1; BAB22317." evidence="3" ref="1">
    <original>K</original>
    <variation>R</variation>
    <location>
        <position position="175"/>
    </location>
</feature>
<evidence type="ECO:0000250" key="1"/>
<evidence type="ECO:0000250" key="2">
    <source>
        <dbReference type="UniProtKB" id="Q9NWT8"/>
    </source>
</evidence>
<evidence type="ECO:0000305" key="3"/>
<proteinExistence type="evidence at protein level"/>
<dbReference type="EMBL" id="AK002737">
    <property type="protein sequence ID" value="BAB22317.1"/>
    <property type="molecule type" value="mRNA"/>
</dbReference>
<dbReference type="EMBL" id="AK003442">
    <property type="protein sequence ID" value="BAB22792.1"/>
    <property type="molecule type" value="mRNA"/>
</dbReference>
<dbReference type="EMBL" id="AK144719">
    <property type="protein sequence ID" value="BAE26030.1"/>
    <property type="molecule type" value="mRNA"/>
</dbReference>
<dbReference type="EMBL" id="AK166049">
    <property type="protein sequence ID" value="BAE38543.1"/>
    <property type="molecule type" value="mRNA"/>
</dbReference>
<dbReference type="EMBL" id="AL670236">
    <property type="status" value="NOT_ANNOTATED_CDS"/>
    <property type="molecule type" value="Genomic_DNA"/>
</dbReference>
<dbReference type="CCDS" id="CCDS19043.1"/>
<dbReference type="RefSeq" id="NP_079614.1">
    <property type="nucleotide sequence ID" value="NM_025338.4"/>
</dbReference>
<dbReference type="RefSeq" id="XP_006539158.1">
    <property type="nucleotide sequence ID" value="XM_006539095.4"/>
</dbReference>
<dbReference type="RefSeq" id="XP_036020197.1">
    <property type="nucleotide sequence ID" value="XM_036164304.1"/>
</dbReference>
<dbReference type="PDB" id="7PNT">
    <property type="method" value="EM"/>
    <property type="resolution" value="3.19 A"/>
    <property type="chains" value="3=1-200"/>
</dbReference>
<dbReference type="PDB" id="7PNU">
    <property type="method" value="EM"/>
    <property type="resolution" value="3.06 A"/>
    <property type="chains" value="3=1-200"/>
</dbReference>
<dbReference type="PDB" id="7PNV">
    <property type="method" value="EM"/>
    <property type="resolution" value="3.06 A"/>
    <property type="chains" value="3=1-200"/>
</dbReference>
<dbReference type="PDB" id="7PNW">
    <property type="method" value="EM"/>
    <property type="resolution" value="3.09 A"/>
    <property type="chains" value="3=1-200"/>
</dbReference>
<dbReference type="PDBsum" id="7PNT"/>
<dbReference type="PDBsum" id="7PNU"/>
<dbReference type="PDBsum" id="7PNV"/>
<dbReference type="PDBsum" id="7PNW"/>
<dbReference type="EMDB" id="EMD-13551"/>
<dbReference type="EMDB" id="EMD-13552"/>
<dbReference type="EMDB" id="EMD-13553"/>
<dbReference type="EMDB" id="EMD-13554"/>
<dbReference type="SMR" id="Q9DCJ7"/>
<dbReference type="BioGRID" id="211198">
    <property type="interactions" value="1"/>
</dbReference>
<dbReference type="ComplexPortal" id="CPX-5301">
    <property type="entry name" value="28S mitochondrial small ribosomal subunit"/>
</dbReference>
<dbReference type="FunCoup" id="Q9DCJ7">
    <property type="interactions" value="1638"/>
</dbReference>
<dbReference type="STRING" id="10090.ENSMUSP00000081114"/>
<dbReference type="iPTMnet" id="Q9DCJ7"/>
<dbReference type="PhosphoSitePlus" id="Q9DCJ7"/>
<dbReference type="PaxDb" id="10090-ENSMUSP00000081114"/>
<dbReference type="ProteomicsDB" id="296152"/>
<dbReference type="Antibodypedia" id="26311">
    <property type="antibodies" value="72 antibodies from 20 providers"/>
</dbReference>
<dbReference type="DNASU" id="66077"/>
<dbReference type="Ensembl" id="ENSMUST00000084097.12">
    <property type="protein sequence ID" value="ENSMUSP00000081114.6"/>
    <property type="gene ID" value="ENSMUSG00000065990.13"/>
</dbReference>
<dbReference type="Ensembl" id="ENSMUST00000105591.2">
    <property type="protein sequence ID" value="ENSMUSP00000101216.2"/>
    <property type="gene ID" value="ENSMUSG00000065990.13"/>
</dbReference>
<dbReference type="Ensembl" id="ENSMUST00000105592.8">
    <property type="protein sequence ID" value="ENSMUSP00000101217.2"/>
    <property type="gene ID" value="ENSMUSG00000065990.13"/>
</dbReference>
<dbReference type="GeneID" id="66077"/>
<dbReference type="KEGG" id="mmu:66077"/>
<dbReference type="UCSC" id="uc008wey.2">
    <property type="organism name" value="mouse"/>
</dbReference>
<dbReference type="AGR" id="MGI:1913327"/>
<dbReference type="CTD" id="54998"/>
<dbReference type="MGI" id="MGI:1913327">
    <property type="gene designation" value="Aurkaip1"/>
</dbReference>
<dbReference type="VEuPathDB" id="HostDB:ENSMUSG00000065990"/>
<dbReference type="eggNOG" id="ENOG502S2YD">
    <property type="taxonomic scope" value="Eukaryota"/>
</dbReference>
<dbReference type="GeneTree" id="ENSGT00390000012802"/>
<dbReference type="HOGENOM" id="CLU_112940_1_0_1"/>
<dbReference type="InParanoid" id="Q9DCJ7"/>
<dbReference type="OMA" id="GWTTPKI"/>
<dbReference type="OrthoDB" id="6139741at2759"/>
<dbReference type="TreeFam" id="TF332330"/>
<dbReference type="Reactome" id="R-MMU-5389840">
    <property type="pathway name" value="Mitochondrial translation elongation"/>
</dbReference>
<dbReference type="Reactome" id="R-MMU-5419276">
    <property type="pathway name" value="Mitochondrial translation termination"/>
</dbReference>
<dbReference type="BioGRID-ORCS" id="66077">
    <property type="hits" value="18 hits in 77 CRISPR screens"/>
</dbReference>
<dbReference type="ChiTaRS" id="Aurkaip1">
    <property type="organism name" value="mouse"/>
</dbReference>
<dbReference type="PRO" id="PR:Q9DCJ7"/>
<dbReference type="Proteomes" id="UP000000589">
    <property type="component" value="Chromosome 4"/>
</dbReference>
<dbReference type="RNAct" id="Q9DCJ7">
    <property type="molecule type" value="protein"/>
</dbReference>
<dbReference type="Bgee" id="ENSMUSG00000065990">
    <property type="expression patterns" value="Expressed in heart right ventricle and 266 other cell types or tissues"/>
</dbReference>
<dbReference type="ExpressionAtlas" id="Q9DCJ7">
    <property type="expression patterns" value="baseline and differential"/>
</dbReference>
<dbReference type="GO" id="GO:0005680">
    <property type="term" value="C:anaphase-promoting complex"/>
    <property type="evidence" value="ECO:0000250"/>
    <property type="project" value="UniProtKB"/>
</dbReference>
<dbReference type="GO" id="GO:0005743">
    <property type="term" value="C:mitochondrial inner membrane"/>
    <property type="evidence" value="ECO:0000303"/>
    <property type="project" value="ComplexPortal"/>
</dbReference>
<dbReference type="GO" id="GO:0005759">
    <property type="term" value="C:mitochondrial matrix"/>
    <property type="evidence" value="ECO:0000250"/>
    <property type="project" value="UniProtKB"/>
</dbReference>
<dbReference type="GO" id="GO:0005763">
    <property type="term" value="C:mitochondrial small ribosomal subunit"/>
    <property type="evidence" value="ECO:0000303"/>
    <property type="project" value="ComplexPortal"/>
</dbReference>
<dbReference type="GO" id="GO:0005739">
    <property type="term" value="C:mitochondrion"/>
    <property type="evidence" value="ECO:0007005"/>
    <property type="project" value="MGI"/>
</dbReference>
<dbReference type="GO" id="GO:0005654">
    <property type="term" value="C:nucleoplasm"/>
    <property type="evidence" value="ECO:0007669"/>
    <property type="project" value="Ensembl"/>
</dbReference>
<dbReference type="GO" id="GO:0005634">
    <property type="term" value="C:nucleus"/>
    <property type="evidence" value="ECO:0000266"/>
    <property type="project" value="MGI"/>
</dbReference>
<dbReference type="GO" id="GO:0032543">
    <property type="term" value="P:mitochondrial translation"/>
    <property type="evidence" value="ECO:0000303"/>
    <property type="project" value="ComplexPortal"/>
</dbReference>
<dbReference type="GO" id="GO:0045862">
    <property type="term" value="P:positive regulation of proteolysis"/>
    <property type="evidence" value="ECO:0000266"/>
    <property type="project" value="MGI"/>
</dbReference>
<dbReference type="GO" id="GO:0016567">
    <property type="term" value="P:protein ubiquitination"/>
    <property type="evidence" value="ECO:0000250"/>
    <property type="project" value="UniProtKB"/>
</dbReference>
<dbReference type="CDD" id="cd23699">
    <property type="entry name" value="At5g63150_CTD"/>
    <property type="match status" value="1"/>
</dbReference>
<dbReference type="InterPro" id="IPR013177">
    <property type="entry name" value="Ribosomal_mS38_C"/>
</dbReference>
<dbReference type="PANTHER" id="PTHR32035">
    <property type="entry name" value="AURORA KINASE A-INTERACTING PROTEIN"/>
    <property type="match status" value="1"/>
</dbReference>
<dbReference type="PANTHER" id="PTHR32035:SF3">
    <property type="entry name" value="SMALL RIBOSOMAL SUBUNIT PROTEIN MS38"/>
    <property type="match status" value="1"/>
</dbReference>
<dbReference type="Pfam" id="PF08213">
    <property type="entry name" value="COX24_C"/>
    <property type="match status" value="1"/>
</dbReference>
<dbReference type="SMART" id="SM01155">
    <property type="entry name" value="DUF1713"/>
    <property type="match status" value="1"/>
</dbReference>